<organism>
    <name type="scientific">Prochlorococcus marinus (strain MIT 9312)</name>
    <dbReference type="NCBI Taxonomy" id="74546"/>
    <lineage>
        <taxon>Bacteria</taxon>
        <taxon>Bacillati</taxon>
        <taxon>Cyanobacteriota</taxon>
        <taxon>Cyanophyceae</taxon>
        <taxon>Synechococcales</taxon>
        <taxon>Prochlorococcaceae</taxon>
        <taxon>Prochlorococcus</taxon>
    </lineage>
</organism>
<evidence type="ECO:0000255" key="1">
    <source>
        <dbReference type="HAMAP-Rule" id="MF_00600"/>
    </source>
</evidence>
<evidence type="ECO:0000256" key="2">
    <source>
        <dbReference type="SAM" id="MobiDB-lite"/>
    </source>
</evidence>
<sequence length="584" mass="61582">MAKQLSFSNESRDALEKGVNFVANAVKVTIGPKAKNVVIERKFGSPDVVRDGSTVAKEIEIENPISNLGAKLIEQVASKTKESAGDGTTTATILTQKMVQEGLKNIASGASPMELKKGMEVGLAFVLEKLSSKSISLSGSDIQKVATVSAGGDQEIGSIISKAMDIVTSDGVITVEESQSLDTELDITEGMSFDRGYSSPYFVTDQERQVCELENPKILITDQKISTLANLVPILEEIQKSGSPFLILAEDIEGEALTTLVLNKNSGVLNVASVRAPLFGERRKAALEDIAILTGAKLISEDKSMTLDQVSINDLGKAKKITITKDKTTIVAFEDTKDLVKARVEKLKREVEMTESEYDQDKINERIAKLAGGVALIKVGAATETEMKYKKLRIEDSLNATKAAIEEGVVSGGGQTLIEISDELLNLSQKSSDDLRTGINIVKEALLEPTKQIAKNAGFNGDVVVAEIKRLNKGFNANSGKYENLKESGILDPTKVIRLALQDSVSIAAMLLTTEVAIADIPEPEAAAPGGPGGDPMGGMGGMGGMGMPGMGGMGMPGMGGMGMPGMGGMGMPGMGGMGMPGMM</sequence>
<reference key="1">
    <citation type="journal article" date="2006" name="Science">
        <title>Genomic islands and the ecology and evolution of Prochlorococcus.</title>
        <authorList>
            <person name="Coleman M.L."/>
            <person name="Sullivan M.B."/>
            <person name="Martiny A.C."/>
            <person name="Steglich C."/>
            <person name="Barry K."/>
            <person name="Delong E.F."/>
            <person name="Chisholm S.W."/>
        </authorList>
    </citation>
    <scope>NUCLEOTIDE SEQUENCE [LARGE SCALE GENOMIC DNA]</scope>
    <source>
        <strain>MIT 9312</strain>
    </source>
</reference>
<proteinExistence type="inferred from homology"/>
<feature type="chain" id="PRO_0000256946" description="Chaperonin GroEL 1">
    <location>
        <begin position="1"/>
        <end position="584"/>
    </location>
</feature>
<feature type="region of interest" description="Disordered" evidence="2">
    <location>
        <begin position="523"/>
        <end position="542"/>
    </location>
</feature>
<feature type="compositionally biased region" description="Gly residues" evidence="2">
    <location>
        <begin position="530"/>
        <end position="542"/>
    </location>
</feature>
<feature type="binding site" evidence="1">
    <location>
        <begin position="29"/>
        <end position="32"/>
    </location>
    <ligand>
        <name>ATP</name>
        <dbReference type="ChEBI" id="CHEBI:30616"/>
    </ligand>
</feature>
<feature type="binding site" evidence="1">
    <location>
        <begin position="86"/>
        <end position="90"/>
    </location>
    <ligand>
        <name>ATP</name>
        <dbReference type="ChEBI" id="CHEBI:30616"/>
    </ligand>
</feature>
<feature type="binding site" evidence="1">
    <location>
        <position position="413"/>
    </location>
    <ligand>
        <name>ATP</name>
        <dbReference type="ChEBI" id="CHEBI:30616"/>
    </ligand>
</feature>
<feature type="binding site" evidence="1">
    <location>
        <position position="492"/>
    </location>
    <ligand>
        <name>ATP</name>
        <dbReference type="ChEBI" id="CHEBI:30616"/>
    </ligand>
</feature>
<name>CH601_PROM9</name>
<accession>Q31C83</accession>
<gene>
    <name evidence="1" type="primary">groEL1</name>
    <name evidence="1" type="synonym">groL1</name>
    <name type="ordered locus">PMT9312_0451</name>
</gene>
<comment type="function">
    <text evidence="1">Together with its co-chaperonin GroES, plays an essential role in assisting protein folding. The GroEL-GroES system forms a nano-cage that allows encapsulation of the non-native substrate proteins and provides a physical environment optimized to promote and accelerate protein folding.</text>
</comment>
<comment type="catalytic activity">
    <reaction evidence="1">
        <text>ATP + H2O + a folded polypeptide = ADP + phosphate + an unfolded polypeptide.</text>
        <dbReference type="EC" id="5.6.1.7"/>
    </reaction>
</comment>
<comment type="subunit">
    <text evidence="1">Forms a cylinder of 14 subunits composed of two heptameric rings stacked back-to-back. Interacts with the co-chaperonin GroES.</text>
</comment>
<comment type="subcellular location">
    <subcellularLocation>
        <location evidence="1">Cytoplasm</location>
    </subcellularLocation>
</comment>
<comment type="similarity">
    <text evidence="1">Belongs to the chaperonin (HSP60) family.</text>
</comment>
<protein>
    <recommendedName>
        <fullName evidence="1">Chaperonin GroEL 1</fullName>
        <ecNumber evidence="1">5.6.1.7</ecNumber>
    </recommendedName>
    <alternativeName>
        <fullName evidence="1">60 kDa chaperonin 1</fullName>
    </alternativeName>
    <alternativeName>
        <fullName evidence="1">Chaperonin-60 1</fullName>
        <shortName evidence="1">Cpn60 1</shortName>
    </alternativeName>
</protein>
<keyword id="KW-0067">ATP-binding</keyword>
<keyword id="KW-0143">Chaperone</keyword>
<keyword id="KW-0963">Cytoplasm</keyword>
<keyword id="KW-0413">Isomerase</keyword>
<keyword id="KW-0547">Nucleotide-binding</keyword>
<dbReference type="EC" id="5.6.1.7" evidence="1"/>
<dbReference type="EMBL" id="CP000111">
    <property type="protein sequence ID" value="ABB49512.1"/>
    <property type="molecule type" value="Genomic_DNA"/>
</dbReference>
<dbReference type="RefSeq" id="WP_011376011.1">
    <property type="nucleotide sequence ID" value="NC_007577.1"/>
</dbReference>
<dbReference type="SMR" id="Q31C83"/>
<dbReference type="STRING" id="74546.PMT9312_0451"/>
<dbReference type="KEGG" id="pmi:PMT9312_0451"/>
<dbReference type="eggNOG" id="COG0459">
    <property type="taxonomic scope" value="Bacteria"/>
</dbReference>
<dbReference type="HOGENOM" id="CLU_016503_3_0_3"/>
<dbReference type="OrthoDB" id="9766614at2"/>
<dbReference type="Proteomes" id="UP000002715">
    <property type="component" value="Chromosome"/>
</dbReference>
<dbReference type="GO" id="GO:0005737">
    <property type="term" value="C:cytoplasm"/>
    <property type="evidence" value="ECO:0007669"/>
    <property type="project" value="UniProtKB-SubCell"/>
</dbReference>
<dbReference type="GO" id="GO:0005524">
    <property type="term" value="F:ATP binding"/>
    <property type="evidence" value="ECO:0007669"/>
    <property type="project" value="UniProtKB-UniRule"/>
</dbReference>
<dbReference type="GO" id="GO:0140662">
    <property type="term" value="F:ATP-dependent protein folding chaperone"/>
    <property type="evidence" value="ECO:0007669"/>
    <property type="project" value="InterPro"/>
</dbReference>
<dbReference type="GO" id="GO:0016853">
    <property type="term" value="F:isomerase activity"/>
    <property type="evidence" value="ECO:0007669"/>
    <property type="project" value="UniProtKB-KW"/>
</dbReference>
<dbReference type="GO" id="GO:0051082">
    <property type="term" value="F:unfolded protein binding"/>
    <property type="evidence" value="ECO:0007669"/>
    <property type="project" value="UniProtKB-UniRule"/>
</dbReference>
<dbReference type="GO" id="GO:0042026">
    <property type="term" value="P:protein refolding"/>
    <property type="evidence" value="ECO:0007669"/>
    <property type="project" value="UniProtKB-UniRule"/>
</dbReference>
<dbReference type="CDD" id="cd03344">
    <property type="entry name" value="GroEL"/>
    <property type="match status" value="1"/>
</dbReference>
<dbReference type="FunFam" id="3.50.7.10:FF:000001">
    <property type="entry name" value="60 kDa chaperonin"/>
    <property type="match status" value="1"/>
</dbReference>
<dbReference type="Gene3D" id="3.50.7.10">
    <property type="entry name" value="GroEL"/>
    <property type="match status" value="1"/>
</dbReference>
<dbReference type="Gene3D" id="1.10.560.10">
    <property type="entry name" value="GroEL-like equatorial domain"/>
    <property type="match status" value="1"/>
</dbReference>
<dbReference type="Gene3D" id="3.30.260.10">
    <property type="entry name" value="TCP-1-like chaperonin intermediate domain"/>
    <property type="match status" value="1"/>
</dbReference>
<dbReference type="HAMAP" id="MF_00600">
    <property type="entry name" value="CH60"/>
    <property type="match status" value="1"/>
</dbReference>
<dbReference type="InterPro" id="IPR018370">
    <property type="entry name" value="Chaperonin_Cpn60_CS"/>
</dbReference>
<dbReference type="InterPro" id="IPR001844">
    <property type="entry name" value="Cpn60/GroEL"/>
</dbReference>
<dbReference type="InterPro" id="IPR002423">
    <property type="entry name" value="Cpn60/GroEL/TCP-1"/>
</dbReference>
<dbReference type="InterPro" id="IPR027409">
    <property type="entry name" value="GroEL-like_apical_dom_sf"/>
</dbReference>
<dbReference type="InterPro" id="IPR027413">
    <property type="entry name" value="GROEL-like_equatorial_sf"/>
</dbReference>
<dbReference type="InterPro" id="IPR027410">
    <property type="entry name" value="TCP-1-like_intermed_sf"/>
</dbReference>
<dbReference type="NCBIfam" id="TIGR02348">
    <property type="entry name" value="GroEL"/>
    <property type="match status" value="1"/>
</dbReference>
<dbReference type="NCBIfam" id="NF000592">
    <property type="entry name" value="PRK00013.1"/>
    <property type="match status" value="1"/>
</dbReference>
<dbReference type="NCBIfam" id="NF009487">
    <property type="entry name" value="PRK12849.1"/>
    <property type="match status" value="1"/>
</dbReference>
<dbReference type="NCBIfam" id="NF009488">
    <property type="entry name" value="PRK12850.1"/>
    <property type="match status" value="1"/>
</dbReference>
<dbReference type="NCBIfam" id="NF009489">
    <property type="entry name" value="PRK12851.1"/>
    <property type="match status" value="1"/>
</dbReference>
<dbReference type="PANTHER" id="PTHR45633">
    <property type="entry name" value="60 KDA HEAT SHOCK PROTEIN, MITOCHONDRIAL"/>
    <property type="match status" value="1"/>
</dbReference>
<dbReference type="Pfam" id="PF00118">
    <property type="entry name" value="Cpn60_TCP1"/>
    <property type="match status" value="1"/>
</dbReference>
<dbReference type="PRINTS" id="PR00298">
    <property type="entry name" value="CHAPERONIN60"/>
</dbReference>
<dbReference type="SUPFAM" id="SSF52029">
    <property type="entry name" value="GroEL apical domain-like"/>
    <property type="match status" value="1"/>
</dbReference>
<dbReference type="SUPFAM" id="SSF48592">
    <property type="entry name" value="GroEL equatorial domain-like"/>
    <property type="match status" value="1"/>
</dbReference>
<dbReference type="SUPFAM" id="SSF54849">
    <property type="entry name" value="GroEL-intermediate domain like"/>
    <property type="match status" value="1"/>
</dbReference>
<dbReference type="PROSITE" id="PS00296">
    <property type="entry name" value="CHAPERONINS_CPN60"/>
    <property type="match status" value="1"/>
</dbReference>